<organism>
    <name type="scientific">Klebsiella pneumoniae (strain 342)</name>
    <dbReference type="NCBI Taxonomy" id="507522"/>
    <lineage>
        <taxon>Bacteria</taxon>
        <taxon>Pseudomonadati</taxon>
        <taxon>Pseudomonadota</taxon>
        <taxon>Gammaproteobacteria</taxon>
        <taxon>Enterobacterales</taxon>
        <taxon>Enterobacteriaceae</taxon>
        <taxon>Klebsiella/Raoultella group</taxon>
        <taxon>Klebsiella</taxon>
        <taxon>Klebsiella pneumoniae complex</taxon>
    </lineage>
</organism>
<comment type="function">
    <text evidence="1">Proton-dependent permease that transports di- and tripeptides.</text>
</comment>
<comment type="subcellular location">
    <subcellularLocation>
        <location evidence="1">Cell inner membrane</location>
        <topology evidence="1">Multi-pass membrane protein</topology>
    </subcellularLocation>
</comment>
<comment type="similarity">
    <text evidence="1">Belongs to the major facilitator superfamily. Proton-dependent oligopeptide transporter (POT/PTR) (TC 2.A.17) family. DtpA subfamily.</text>
</comment>
<sequence length="501" mass="54053">MSTANNKPAESVSLNAFKQPRAFYLIFSIELWERFGYYGLQGIMAVYLVKQLGMSEADSITLFSSFSALVYGLVAIGGWLGDKVLGTKRVIMLGAIVLAIGYALVAWSGHDAAIVYMGMATIAVGNGLFKANPSSLLSTCYDKNDPRLDGAFTMYYMSINIGSFFSMLATPWLAARFGWSVAFALSVVGMVITIINFAFCQKWVKQYGSKPDFAPVHMGKLLATIAGVVVLVAIATWLLHNQGIARMVLGVVALGIVVIFAKETIGLKGAARRKMIVAFLLMVEAIVFFVLYSQMPTSLNFFAIRNVEHSILGIAFEPEQYQALNPFWIMIGSPILAAIYNKMGDRLPMPHKFAIGMVLCSGAFLVLPLGAKFASDAGIVSVNWLILSYALQSIGELMISGLGLAMVAQLVPQRLMGFIMGSWFLTTAGAAIIAGKIANLMAVPENVTDPLVSLEVYGHVFLQIGIVTAVIAALMLLTAPKLNRMTQDDSADLKARETAAA</sequence>
<name>DTPA_KLEP3</name>
<feature type="chain" id="PRO_0000395178" description="Dipeptide and tripeptide permease A">
    <location>
        <begin position="1"/>
        <end position="501"/>
    </location>
</feature>
<feature type="topological domain" description="Cytoplasmic" evidence="1">
    <location>
        <begin position="1"/>
        <end position="21"/>
    </location>
</feature>
<feature type="transmembrane region" description="Helical" evidence="1">
    <location>
        <begin position="22"/>
        <end position="44"/>
    </location>
</feature>
<feature type="topological domain" description="Periplasmic" evidence="1">
    <location>
        <begin position="45"/>
        <end position="59"/>
    </location>
</feature>
<feature type="transmembrane region" description="Helical" evidence="1">
    <location>
        <begin position="60"/>
        <end position="80"/>
    </location>
</feature>
<feature type="topological domain" description="Cytoplasmic" evidence="1">
    <location>
        <begin position="81"/>
        <end position="89"/>
    </location>
</feature>
<feature type="transmembrane region" description="Helical" evidence="1">
    <location>
        <begin position="90"/>
        <end position="110"/>
    </location>
</feature>
<feature type="topological domain" description="Periplasmic" evidence="1">
    <location>
        <position position="111"/>
    </location>
</feature>
<feature type="transmembrane region" description="Helical" evidence="1">
    <location>
        <begin position="112"/>
        <end position="132"/>
    </location>
</feature>
<feature type="topological domain" description="Cytoplasmic" evidence="1">
    <location>
        <begin position="133"/>
        <end position="153"/>
    </location>
</feature>
<feature type="transmembrane region" description="Helical" evidence="1">
    <location>
        <begin position="154"/>
        <end position="174"/>
    </location>
</feature>
<feature type="topological domain" description="Periplasmic" evidence="1">
    <location>
        <begin position="175"/>
        <end position="178"/>
    </location>
</feature>
<feature type="transmembrane region" description="Helical" evidence="1">
    <location>
        <begin position="179"/>
        <end position="199"/>
    </location>
</feature>
<feature type="topological domain" description="Cytoplasmic" evidence="1">
    <location>
        <begin position="200"/>
        <end position="218"/>
    </location>
</feature>
<feature type="transmembrane region" description="Helical" evidence="1">
    <location>
        <begin position="219"/>
        <end position="239"/>
    </location>
</feature>
<feature type="topological domain" description="Periplasmic" evidence="1">
    <location>
        <begin position="240"/>
        <end position="246"/>
    </location>
</feature>
<feature type="transmembrane region" description="Helical" evidence="1">
    <location>
        <begin position="247"/>
        <end position="267"/>
    </location>
</feature>
<feature type="topological domain" description="Cytoplasmic" evidence="1">
    <location>
        <begin position="268"/>
        <end position="274"/>
    </location>
</feature>
<feature type="transmembrane region" description="Helical" evidence="1">
    <location>
        <begin position="275"/>
        <end position="295"/>
    </location>
</feature>
<feature type="topological domain" description="Periplasmic" evidence="1">
    <location>
        <begin position="296"/>
        <end position="320"/>
    </location>
</feature>
<feature type="transmembrane region" description="Helical" evidence="1">
    <location>
        <begin position="321"/>
        <end position="341"/>
    </location>
</feature>
<feature type="topological domain" description="Cytoplasmic" evidence="1">
    <location>
        <begin position="342"/>
        <end position="352"/>
    </location>
</feature>
<feature type="transmembrane region" description="Helical" evidence="1">
    <location>
        <begin position="353"/>
        <end position="373"/>
    </location>
</feature>
<feature type="topological domain" description="Periplasmic" evidence="1">
    <location>
        <begin position="374"/>
        <end position="383"/>
    </location>
</feature>
<feature type="transmembrane region" description="Helical" evidence="1">
    <location>
        <begin position="384"/>
        <end position="404"/>
    </location>
</feature>
<feature type="topological domain" description="Cytoplasmic" evidence="1">
    <location>
        <begin position="405"/>
        <end position="414"/>
    </location>
</feature>
<feature type="transmembrane region" description="Helical" evidence="1">
    <location>
        <begin position="415"/>
        <end position="435"/>
    </location>
</feature>
<feature type="topological domain" description="Periplasmic" evidence="1">
    <location>
        <begin position="436"/>
        <end position="459"/>
    </location>
</feature>
<feature type="transmembrane region" description="Helical" evidence="1">
    <location>
        <begin position="460"/>
        <end position="480"/>
    </location>
</feature>
<feature type="topological domain" description="Cytoplasmic" evidence="1">
    <location>
        <begin position="481"/>
        <end position="501"/>
    </location>
</feature>
<proteinExistence type="inferred from homology"/>
<dbReference type="EMBL" id="CP000964">
    <property type="protein sequence ID" value="ACI09792.1"/>
    <property type="molecule type" value="Genomic_DNA"/>
</dbReference>
<dbReference type="SMR" id="B5XWP3"/>
<dbReference type="KEGG" id="kpe:KPK_2376"/>
<dbReference type="HOGENOM" id="CLU_004790_0_0_6"/>
<dbReference type="Proteomes" id="UP000001734">
    <property type="component" value="Chromosome"/>
</dbReference>
<dbReference type="GO" id="GO:0005886">
    <property type="term" value="C:plasma membrane"/>
    <property type="evidence" value="ECO:0007669"/>
    <property type="project" value="UniProtKB-SubCell"/>
</dbReference>
<dbReference type="GO" id="GO:0071916">
    <property type="term" value="F:dipeptide transmembrane transporter activity"/>
    <property type="evidence" value="ECO:0007669"/>
    <property type="project" value="UniProtKB-UniRule"/>
</dbReference>
<dbReference type="GO" id="GO:0015333">
    <property type="term" value="F:peptide:proton symporter activity"/>
    <property type="evidence" value="ECO:0007669"/>
    <property type="project" value="UniProtKB-UniRule"/>
</dbReference>
<dbReference type="GO" id="GO:0042937">
    <property type="term" value="F:tripeptide transmembrane transporter activity"/>
    <property type="evidence" value="ECO:0007669"/>
    <property type="project" value="UniProtKB-UniRule"/>
</dbReference>
<dbReference type="GO" id="GO:0015031">
    <property type="term" value="P:protein transport"/>
    <property type="evidence" value="ECO:0007669"/>
    <property type="project" value="UniProtKB-KW"/>
</dbReference>
<dbReference type="CDD" id="cd17346">
    <property type="entry name" value="MFS_DtpA_like"/>
    <property type="match status" value="1"/>
</dbReference>
<dbReference type="FunFam" id="1.20.1250.20:FF:000017">
    <property type="entry name" value="Dipeptide and tripeptide permease A"/>
    <property type="match status" value="1"/>
</dbReference>
<dbReference type="Gene3D" id="1.20.1250.20">
    <property type="entry name" value="MFS general substrate transporter like domains"/>
    <property type="match status" value="1"/>
</dbReference>
<dbReference type="HAMAP" id="MF_01878">
    <property type="entry name" value="PTR2_DtpA_subfam"/>
    <property type="match status" value="1"/>
</dbReference>
<dbReference type="InterPro" id="IPR023517">
    <property type="entry name" value="AA/pep_transptr_DtpA"/>
</dbReference>
<dbReference type="InterPro" id="IPR005279">
    <property type="entry name" value="Dipep/tripep_permease"/>
</dbReference>
<dbReference type="InterPro" id="IPR020846">
    <property type="entry name" value="MFS_dom"/>
</dbReference>
<dbReference type="InterPro" id="IPR036259">
    <property type="entry name" value="MFS_trans_sf"/>
</dbReference>
<dbReference type="InterPro" id="IPR050171">
    <property type="entry name" value="MFS_Transporters"/>
</dbReference>
<dbReference type="InterPro" id="IPR000109">
    <property type="entry name" value="POT_fam"/>
</dbReference>
<dbReference type="InterPro" id="IPR018456">
    <property type="entry name" value="PTR2_symporter_CS"/>
</dbReference>
<dbReference type="NCBIfam" id="NF007137">
    <property type="entry name" value="PRK09584.1"/>
    <property type="match status" value="1"/>
</dbReference>
<dbReference type="NCBIfam" id="TIGR00924">
    <property type="entry name" value="yjdL_sub1_fam"/>
    <property type="match status" value="1"/>
</dbReference>
<dbReference type="PANTHER" id="PTHR23517:SF15">
    <property type="entry name" value="PROTON-DEPENDENT OLIGOPEPTIDE FAMILY TRANSPORT PROTEIN"/>
    <property type="match status" value="1"/>
</dbReference>
<dbReference type="PANTHER" id="PTHR23517">
    <property type="entry name" value="RESISTANCE PROTEIN MDTM, PUTATIVE-RELATED-RELATED"/>
    <property type="match status" value="1"/>
</dbReference>
<dbReference type="Pfam" id="PF00854">
    <property type="entry name" value="PTR2"/>
    <property type="match status" value="1"/>
</dbReference>
<dbReference type="SUPFAM" id="SSF103473">
    <property type="entry name" value="MFS general substrate transporter"/>
    <property type="match status" value="1"/>
</dbReference>
<dbReference type="PROSITE" id="PS50850">
    <property type="entry name" value="MFS"/>
    <property type="match status" value="1"/>
</dbReference>
<dbReference type="PROSITE" id="PS01022">
    <property type="entry name" value="PTR2_1"/>
    <property type="match status" value="1"/>
</dbReference>
<dbReference type="PROSITE" id="PS01023">
    <property type="entry name" value="PTR2_2"/>
    <property type="match status" value="1"/>
</dbReference>
<protein>
    <recommendedName>
        <fullName evidence="1">Dipeptide and tripeptide permease A</fullName>
    </recommendedName>
</protein>
<gene>
    <name evidence="1" type="primary">dtpA</name>
    <name type="ordered locus">KPK_2376</name>
</gene>
<accession>B5XWP3</accession>
<reference key="1">
    <citation type="journal article" date="2008" name="PLoS Genet.">
        <title>Complete genome sequence of the N2-fixing broad host range endophyte Klebsiella pneumoniae 342 and virulence predictions verified in mice.</title>
        <authorList>
            <person name="Fouts D.E."/>
            <person name="Tyler H.L."/>
            <person name="DeBoy R.T."/>
            <person name="Daugherty S."/>
            <person name="Ren Q."/>
            <person name="Badger J.H."/>
            <person name="Durkin A.S."/>
            <person name="Huot H."/>
            <person name="Shrivastava S."/>
            <person name="Kothari S."/>
            <person name="Dodson R.J."/>
            <person name="Mohamoud Y."/>
            <person name="Khouri H."/>
            <person name="Roesch L.F.W."/>
            <person name="Krogfelt K.A."/>
            <person name="Struve C."/>
            <person name="Triplett E.W."/>
            <person name="Methe B.A."/>
        </authorList>
    </citation>
    <scope>NUCLEOTIDE SEQUENCE [LARGE SCALE GENOMIC DNA]</scope>
    <source>
        <strain>342</strain>
    </source>
</reference>
<evidence type="ECO:0000255" key="1">
    <source>
        <dbReference type="HAMAP-Rule" id="MF_01878"/>
    </source>
</evidence>
<keyword id="KW-0997">Cell inner membrane</keyword>
<keyword id="KW-1003">Cell membrane</keyword>
<keyword id="KW-0472">Membrane</keyword>
<keyword id="KW-0571">Peptide transport</keyword>
<keyword id="KW-0653">Protein transport</keyword>
<keyword id="KW-0812">Transmembrane</keyword>
<keyword id="KW-1133">Transmembrane helix</keyword>
<keyword id="KW-0813">Transport</keyword>